<keyword id="KW-0520">NAD</keyword>
<keyword id="KW-0560">Oxidoreductase</keyword>
<keyword id="KW-0816">Tricarboxylic acid cycle</keyword>
<name>MDH_BURO1</name>
<feature type="initiator methionine" description="Removed" evidence="1">
    <location>
        <position position="1"/>
    </location>
</feature>
<feature type="chain" id="PRO_0000294376" description="Malate dehydrogenase">
    <location>
        <begin position="2"/>
        <end position="328"/>
    </location>
</feature>
<feature type="active site" description="Proton acceptor" evidence="2">
    <location>
        <position position="188"/>
    </location>
</feature>
<feature type="binding site" evidence="2">
    <location>
        <begin position="12"/>
        <end position="18"/>
    </location>
    <ligand>
        <name>NAD(+)</name>
        <dbReference type="ChEBI" id="CHEBI:57540"/>
    </ligand>
</feature>
<feature type="binding site" evidence="2">
    <location>
        <position position="93"/>
    </location>
    <ligand>
        <name>substrate</name>
    </ligand>
</feature>
<feature type="binding site" evidence="2">
    <location>
        <position position="99"/>
    </location>
    <ligand>
        <name>substrate</name>
    </ligand>
</feature>
<feature type="binding site" evidence="2">
    <location>
        <position position="106"/>
    </location>
    <ligand>
        <name>NAD(+)</name>
        <dbReference type="ChEBI" id="CHEBI:57540"/>
    </ligand>
</feature>
<feature type="binding site" evidence="2">
    <location>
        <position position="113"/>
    </location>
    <ligand>
        <name>NAD(+)</name>
        <dbReference type="ChEBI" id="CHEBI:57540"/>
    </ligand>
</feature>
<feature type="binding site" evidence="2">
    <location>
        <begin position="130"/>
        <end position="132"/>
    </location>
    <ligand>
        <name>NAD(+)</name>
        <dbReference type="ChEBI" id="CHEBI:57540"/>
    </ligand>
</feature>
<feature type="binding site" evidence="2">
    <location>
        <position position="132"/>
    </location>
    <ligand>
        <name>substrate</name>
    </ligand>
</feature>
<feature type="binding site" evidence="2">
    <location>
        <position position="163"/>
    </location>
    <ligand>
        <name>substrate</name>
    </ligand>
</feature>
<reference key="1">
    <citation type="submission" date="2006-05" db="EMBL/GenBank/DDBJ databases">
        <title>Complete sequence of chromosome 2 of Burkholderia cenocepacia AU 1054.</title>
        <authorList>
            <consortium name="US DOE Joint Genome Institute"/>
            <person name="Copeland A."/>
            <person name="Lucas S."/>
            <person name="Lapidus A."/>
            <person name="Barry K."/>
            <person name="Detter J.C."/>
            <person name="Glavina del Rio T."/>
            <person name="Hammon N."/>
            <person name="Israni S."/>
            <person name="Dalin E."/>
            <person name="Tice H."/>
            <person name="Pitluck S."/>
            <person name="Chain P."/>
            <person name="Malfatti S."/>
            <person name="Shin M."/>
            <person name="Vergez L."/>
            <person name="Schmutz J."/>
            <person name="Larimer F."/>
            <person name="Land M."/>
            <person name="Hauser L."/>
            <person name="Kyrpides N."/>
            <person name="Lykidis A."/>
            <person name="LiPuma J.J."/>
            <person name="Konstantinidis K."/>
            <person name="Tiedje J.M."/>
            <person name="Richardson P."/>
        </authorList>
    </citation>
    <scope>NUCLEOTIDE SEQUENCE [LARGE SCALE GENOMIC DNA]</scope>
    <source>
        <strain>AU 1054</strain>
    </source>
</reference>
<sequence length="328" mass="35103">MAKPAKRVAVTGAAGQIAYSLLFRIANGDLLGKDQPVILQLLDLPQAQGAVKGVVMELDDCAFPLLAGVVITDDPKVAFKDADVALLVGARPRSKGMERKDLLSANAEIFTVQGAALNEVASRDVKVLVVGNPANTNAYIAMKSAPDLPKKNFTAMLRLDHNRALSQLAAKSGKPVASIEKLAVWGNHSPTMYPDFRFATAEGESLLKLINDDVWNRDTFIPTVGKRGAAIIEARGLSSAASAANAAIDHVRDWVLGTNGKWVTMGIPSDGSYGIPEDIIYGVPVTCENGEYKRVEGLEIDAFSREKMDGTLAELLEERDGVAHLLKN</sequence>
<protein>
    <recommendedName>
        <fullName evidence="2">Malate dehydrogenase</fullName>
        <ecNumber evidence="2">1.1.1.37</ecNumber>
    </recommendedName>
</protein>
<gene>
    <name evidence="2" type="primary">mdh</name>
    <name type="ordered locus">Bcen_4435</name>
</gene>
<organism>
    <name type="scientific">Burkholderia orbicola (strain AU 1054)</name>
    <dbReference type="NCBI Taxonomy" id="331271"/>
    <lineage>
        <taxon>Bacteria</taxon>
        <taxon>Pseudomonadati</taxon>
        <taxon>Pseudomonadota</taxon>
        <taxon>Betaproteobacteria</taxon>
        <taxon>Burkholderiales</taxon>
        <taxon>Burkholderiaceae</taxon>
        <taxon>Burkholderia</taxon>
        <taxon>Burkholderia cepacia complex</taxon>
        <taxon>Burkholderia orbicola</taxon>
    </lineage>
</organism>
<accession>Q1BM38</accession>
<dbReference type="EC" id="1.1.1.37" evidence="2"/>
<dbReference type="EMBL" id="CP000379">
    <property type="protein sequence ID" value="ABF79317.1"/>
    <property type="molecule type" value="Genomic_DNA"/>
</dbReference>
<dbReference type="SMR" id="Q1BM38"/>
<dbReference type="HOGENOM" id="CLU_040727_2_0_4"/>
<dbReference type="GO" id="GO:0030060">
    <property type="term" value="F:L-malate dehydrogenase (NAD+) activity"/>
    <property type="evidence" value="ECO:0007669"/>
    <property type="project" value="UniProtKB-UniRule"/>
</dbReference>
<dbReference type="GO" id="GO:0006108">
    <property type="term" value="P:malate metabolic process"/>
    <property type="evidence" value="ECO:0007669"/>
    <property type="project" value="InterPro"/>
</dbReference>
<dbReference type="GO" id="GO:0006099">
    <property type="term" value="P:tricarboxylic acid cycle"/>
    <property type="evidence" value="ECO:0007669"/>
    <property type="project" value="UniProtKB-UniRule"/>
</dbReference>
<dbReference type="CDD" id="cd01338">
    <property type="entry name" value="MDH_chloroplast-like"/>
    <property type="match status" value="1"/>
</dbReference>
<dbReference type="FunFam" id="3.40.50.720:FF:000010">
    <property type="entry name" value="Malate dehydrogenase"/>
    <property type="match status" value="1"/>
</dbReference>
<dbReference type="FunFam" id="3.90.110.10:FF:000002">
    <property type="entry name" value="Malate dehydrogenase"/>
    <property type="match status" value="1"/>
</dbReference>
<dbReference type="Gene3D" id="3.90.110.10">
    <property type="entry name" value="Lactate dehydrogenase/glycoside hydrolase, family 4, C-terminal"/>
    <property type="match status" value="1"/>
</dbReference>
<dbReference type="Gene3D" id="3.40.50.720">
    <property type="entry name" value="NAD(P)-binding Rossmann-like Domain"/>
    <property type="match status" value="1"/>
</dbReference>
<dbReference type="HAMAP" id="MF_01517">
    <property type="entry name" value="Malate_dehydrog_2"/>
    <property type="match status" value="1"/>
</dbReference>
<dbReference type="InterPro" id="IPR001557">
    <property type="entry name" value="L-lactate/malate_DH"/>
</dbReference>
<dbReference type="InterPro" id="IPR022383">
    <property type="entry name" value="Lactate/malate_DH_C"/>
</dbReference>
<dbReference type="InterPro" id="IPR001236">
    <property type="entry name" value="Lactate/malate_DH_N"/>
</dbReference>
<dbReference type="InterPro" id="IPR015955">
    <property type="entry name" value="Lactate_DH/Glyco_Ohase_4_C"/>
</dbReference>
<dbReference type="InterPro" id="IPR010945">
    <property type="entry name" value="Malate_DH_type2"/>
</dbReference>
<dbReference type="InterPro" id="IPR036291">
    <property type="entry name" value="NAD(P)-bd_dom_sf"/>
</dbReference>
<dbReference type="NCBIfam" id="TIGR01759">
    <property type="entry name" value="MalateDH-SF1"/>
    <property type="match status" value="1"/>
</dbReference>
<dbReference type="NCBIfam" id="NF003916">
    <property type="entry name" value="PRK05442.1"/>
    <property type="match status" value="1"/>
</dbReference>
<dbReference type="PANTHER" id="PTHR23382">
    <property type="entry name" value="MALATE DEHYDROGENASE"/>
    <property type="match status" value="1"/>
</dbReference>
<dbReference type="Pfam" id="PF02866">
    <property type="entry name" value="Ldh_1_C"/>
    <property type="match status" value="1"/>
</dbReference>
<dbReference type="Pfam" id="PF00056">
    <property type="entry name" value="Ldh_1_N"/>
    <property type="match status" value="1"/>
</dbReference>
<dbReference type="PIRSF" id="PIRSF000102">
    <property type="entry name" value="Lac_mal_DH"/>
    <property type="match status" value="1"/>
</dbReference>
<dbReference type="SUPFAM" id="SSF56327">
    <property type="entry name" value="LDH C-terminal domain-like"/>
    <property type="match status" value="1"/>
</dbReference>
<dbReference type="SUPFAM" id="SSF51735">
    <property type="entry name" value="NAD(P)-binding Rossmann-fold domains"/>
    <property type="match status" value="1"/>
</dbReference>
<evidence type="ECO:0000250" key="1"/>
<evidence type="ECO:0000255" key="2">
    <source>
        <dbReference type="HAMAP-Rule" id="MF_01517"/>
    </source>
</evidence>
<comment type="function">
    <text evidence="2">Catalyzes the reversible oxidation of malate to oxaloacetate.</text>
</comment>
<comment type="catalytic activity">
    <reaction evidence="2">
        <text>(S)-malate + NAD(+) = oxaloacetate + NADH + H(+)</text>
        <dbReference type="Rhea" id="RHEA:21432"/>
        <dbReference type="ChEBI" id="CHEBI:15378"/>
        <dbReference type="ChEBI" id="CHEBI:15589"/>
        <dbReference type="ChEBI" id="CHEBI:16452"/>
        <dbReference type="ChEBI" id="CHEBI:57540"/>
        <dbReference type="ChEBI" id="CHEBI:57945"/>
        <dbReference type="EC" id="1.1.1.37"/>
    </reaction>
</comment>
<comment type="similarity">
    <text evidence="2">Belongs to the LDH/MDH superfamily. MDH type 2 family.</text>
</comment>
<proteinExistence type="inferred from homology"/>